<protein>
    <recommendedName>
        <fullName evidence="5">AP-4 complex accessory subunit Tepsin</fullName>
    </recommendedName>
    <alternativeName>
        <fullName evidence="6">ENTH domain-containing protein 2</fullName>
    </alternativeName>
    <alternativeName>
        <fullName evidence="4">Tetra-epsin</fullName>
    </alternativeName>
</protein>
<dbReference type="EMBL" id="CH473948">
    <property type="protein sequence ID" value="EDM06814.1"/>
    <property type="molecule type" value="Genomic_DNA"/>
</dbReference>
<dbReference type="EMBL" id="BC089956">
    <property type="protein sequence ID" value="AAH89956.1"/>
    <property type="molecule type" value="mRNA"/>
</dbReference>
<dbReference type="RefSeq" id="NP_001094199.1">
    <property type="nucleotide sequence ID" value="NM_001100729.1"/>
</dbReference>
<dbReference type="SMR" id="G3V8Y7"/>
<dbReference type="FunCoup" id="G3V8Y7">
    <property type="interactions" value="1849"/>
</dbReference>
<dbReference type="STRING" id="10116.ENSRNOP00000031142"/>
<dbReference type="GlyGen" id="G3V8Y7">
    <property type="glycosylation" value="2 sites"/>
</dbReference>
<dbReference type="iPTMnet" id="G3V8Y7"/>
<dbReference type="PhosphoSitePlus" id="G3V8Y7"/>
<dbReference type="PaxDb" id="10116-ENSRNOP00000031142"/>
<dbReference type="GeneID" id="360673"/>
<dbReference type="KEGG" id="rno:360673"/>
<dbReference type="AGR" id="RGD:1307410"/>
<dbReference type="CTD" id="146705"/>
<dbReference type="RGD" id="1307410">
    <property type="gene designation" value="Tepsin"/>
</dbReference>
<dbReference type="VEuPathDB" id="HostDB:ENSRNOG00000028161"/>
<dbReference type="eggNOG" id="ENOG502QV38">
    <property type="taxonomic scope" value="Eukaryota"/>
</dbReference>
<dbReference type="HOGENOM" id="CLU_030958_0_0_1"/>
<dbReference type="InParanoid" id="G3V8Y7"/>
<dbReference type="OrthoDB" id="79589at9989"/>
<dbReference type="TreeFam" id="TF331354"/>
<dbReference type="PRO" id="PR:G3V8Y7"/>
<dbReference type="Proteomes" id="UP000002494">
    <property type="component" value="Chromosome 10"/>
</dbReference>
<dbReference type="Proteomes" id="UP000234681">
    <property type="component" value="Chromosome 10"/>
</dbReference>
<dbReference type="Bgee" id="ENSRNOG00000028161">
    <property type="expression patterns" value="Expressed in pancreas and 20 other cell types or tissues"/>
</dbReference>
<dbReference type="GO" id="GO:0030662">
    <property type="term" value="C:coated vesicle membrane"/>
    <property type="evidence" value="ECO:0000314"/>
    <property type="project" value="UniProtKB"/>
</dbReference>
<dbReference type="GO" id="GO:0005737">
    <property type="term" value="C:cytoplasm"/>
    <property type="evidence" value="ECO:0000266"/>
    <property type="project" value="RGD"/>
</dbReference>
<dbReference type="GO" id="GO:0005829">
    <property type="term" value="C:cytosol"/>
    <property type="evidence" value="ECO:0007669"/>
    <property type="project" value="UniProtKB-SubCell"/>
</dbReference>
<dbReference type="GO" id="GO:0031090">
    <property type="term" value="C:organelle membrane"/>
    <property type="evidence" value="ECO:0000266"/>
    <property type="project" value="RGD"/>
</dbReference>
<dbReference type="GO" id="GO:0032588">
    <property type="term" value="C:trans-Golgi network membrane"/>
    <property type="evidence" value="ECO:0000266"/>
    <property type="project" value="RGD"/>
</dbReference>
<dbReference type="GO" id="GO:0044877">
    <property type="term" value="F:protein-containing complex binding"/>
    <property type="evidence" value="ECO:0000266"/>
    <property type="project" value="RGD"/>
</dbReference>
<dbReference type="CDD" id="cd03572">
    <property type="entry name" value="ENTH_like_Tepsin"/>
    <property type="match status" value="1"/>
</dbReference>
<dbReference type="FunFam" id="1.25.40.90:FF:000029">
    <property type="entry name" value="AP-4 complex accessory subunit Tepsin"/>
    <property type="match status" value="1"/>
</dbReference>
<dbReference type="Gene3D" id="1.25.40.90">
    <property type="match status" value="1"/>
</dbReference>
<dbReference type="InterPro" id="IPR013809">
    <property type="entry name" value="ENTH"/>
</dbReference>
<dbReference type="InterPro" id="IPR035802">
    <property type="entry name" value="ENTH/VHS_tepsin"/>
</dbReference>
<dbReference type="InterPro" id="IPR008942">
    <property type="entry name" value="ENTH_VHS"/>
</dbReference>
<dbReference type="InterPro" id="IPR039273">
    <property type="entry name" value="TEPSIN"/>
</dbReference>
<dbReference type="PANTHER" id="PTHR21514">
    <property type="entry name" value="AP-4 COMPLEX ACCESSORY SUBUNIT TEPSIN"/>
    <property type="match status" value="1"/>
</dbReference>
<dbReference type="PANTHER" id="PTHR21514:SF0">
    <property type="entry name" value="AP-4 COMPLEX ACCESSORY SUBUNIT TEPSIN"/>
    <property type="match status" value="1"/>
</dbReference>
<dbReference type="Pfam" id="PF01417">
    <property type="entry name" value="ENTH"/>
    <property type="match status" value="1"/>
</dbReference>
<dbReference type="SUPFAM" id="SSF48464">
    <property type="entry name" value="ENTH/VHS domain"/>
    <property type="match status" value="1"/>
</dbReference>
<name>AP4AT_RAT</name>
<keyword id="KW-0963">Cytoplasm</keyword>
<keyword id="KW-0968">Cytoplasmic vesicle</keyword>
<keyword id="KW-0333">Golgi apparatus</keyword>
<keyword id="KW-0472">Membrane</keyword>
<keyword id="KW-0597">Phosphoprotein</keyword>
<keyword id="KW-1185">Reference proteome</keyword>
<sequence>MAAVPPLRDRLSFLHRLPILLKGTSDDDIPCPGYLFEEIAKISHESLGSSQCLLEYLLNRLDSSSGHVKLKVLKILLYLCSHGSSSFMLILRRNSALIQEATAFAGPPDPLHGNSLYQKVRAAAQDLGSTLFSDALPQPPSQPPQILPPAGMGAQARPHSALQGFGYTKESSRTGSAGETFLSTIQRAAEVVVNAVRPGPDNPCTKGPLPHGDAYQPAVTPSASHTHPNPGNLLPAAIQGTRAVKHQPGQAGGGWDEMDSSPSSQNSSCTSNLSRASDSVSRSGSDSHSGASREPGDLAERAEGMAPNDCQQELNLVRTVTQGPRVFLSREETQHFIKECGLLNCEAVLELLLQQLVGTSECEQMRALCAIASFGSADLLPQEHILLLCRQQLQELGAGSPGPVTNKATKILRHLEASCGQQFPTLRPCAQPNSAAAVVGPADLLTSPVPPPGSQVFLQPLSSTAVVPRSPVPTPSPDTLPPALQDPGELRTQLVCSSEPGTGSEQRLENTDTPKDSSSPCPWSPNSLFAGMELVACTRLPCPSFQADLQKVTTEPPVSEPSAFAFLNM</sequence>
<feature type="chain" id="PRO_0000418126" description="AP-4 complex accessory subunit Tepsin">
    <location>
        <begin position="1"/>
        <end position="569"/>
    </location>
</feature>
<feature type="domain" description="ENTH">
    <location>
        <begin position="8"/>
        <end position="141"/>
    </location>
</feature>
<feature type="region of interest" description="Disordered" evidence="2">
    <location>
        <begin position="196"/>
        <end position="298"/>
    </location>
</feature>
<feature type="region of interest" description="Disordered" evidence="2">
    <location>
        <begin position="467"/>
        <end position="524"/>
    </location>
</feature>
<feature type="region of interest" description="Interaction with AP4B1" evidence="1">
    <location>
        <begin position="525"/>
        <end position="535"/>
    </location>
</feature>
<feature type="region of interest" description="Interaction with AP4E1" evidence="1">
    <location>
        <begin position="559"/>
        <end position="569"/>
    </location>
</feature>
<feature type="compositionally biased region" description="Polar residues" evidence="2">
    <location>
        <begin position="219"/>
        <end position="229"/>
    </location>
</feature>
<feature type="compositionally biased region" description="Low complexity" evidence="2">
    <location>
        <begin position="260"/>
        <end position="292"/>
    </location>
</feature>
<feature type="compositionally biased region" description="Pro residues" evidence="2">
    <location>
        <begin position="470"/>
        <end position="480"/>
    </location>
</feature>
<feature type="compositionally biased region" description="Polar residues" evidence="2">
    <location>
        <begin position="494"/>
        <end position="505"/>
    </location>
</feature>
<feature type="compositionally biased region" description="Basic and acidic residues" evidence="2">
    <location>
        <begin position="506"/>
        <end position="515"/>
    </location>
</feature>
<feature type="modified residue" description="Phosphoserine" evidence="7">
    <location>
        <position position="400"/>
    </location>
</feature>
<comment type="function">
    <text evidence="1">Associates with the adapter-like complex 4 (AP-4) and may therefore play a role in vesicular trafficking of proteins at the trans-Golgi network.</text>
</comment>
<comment type="subunit">
    <text evidence="1">Interacts with AP4B1 and AP4E1; the interaction is direct and mediates the association of TEPSIN with the adapter-like complex 4 (AP-4), a heterotetramer composed of AP4B1, AP4E1, AP4M1 and AP4S1.</text>
</comment>
<comment type="subcellular location">
    <subcellularLocation>
        <location evidence="3">Golgi apparatus</location>
        <location evidence="3">trans-Golgi network membrane</location>
        <topology evidence="1">Peripheral membrane protein</topology>
    </subcellularLocation>
    <subcellularLocation>
        <location evidence="3">Cytoplasmic vesicle</location>
    </subcellularLocation>
    <subcellularLocation>
        <location evidence="1">Cytoplasm</location>
        <location evidence="1">Cytosol</location>
    </subcellularLocation>
    <text evidence="3">Extensively colocalizes with AP-4 which mediates the recruitment of TEPSIN to the trans-Golgi network.</text>
</comment>
<accession>G3V8Y7</accession>
<accession>Q5EB78</accession>
<proteinExistence type="evidence at protein level"/>
<gene>
    <name evidence="4 6" type="primary">Tepsin</name>
    <name evidence="6" type="synonym">Enthd2</name>
</gene>
<reference key="1">
    <citation type="submission" date="2005-07" db="EMBL/GenBank/DDBJ databases">
        <authorList>
            <person name="Mural R.J."/>
            <person name="Adams M.D."/>
            <person name="Myers E.W."/>
            <person name="Smith H.O."/>
            <person name="Venter J.C."/>
        </authorList>
    </citation>
    <scope>NUCLEOTIDE SEQUENCE [LARGE SCALE GENOMIC DNA]</scope>
</reference>
<reference key="2">
    <citation type="journal article" date="2004" name="Genome Res.">
        <title>The status, quality, and expansion of the NIH full-length cDNA project: the Mammalian Gene Collection (MGC).</title>
        <authorList>
            <consortium name="The MGC Project Team"/>
        </authorList>
    </citation>
    <scope>NUCLEOTIDE SEQUENCE [LARGE SCALE MRNA] OF 332-569</scope>
    <source>
        <tissue>Brain</tissue>
    </source>
</reference>
<reference key="3">
    <citation type="journal article" date="2012" name="J. Cell Biol.">
        <title>Multivariate proteomic profiling identifies novel accessory proteins of coated vesicles.</title>
        <authorList>
            <person name="Borner G.H."/>
            <person name="Antrobus R."/>
            <person name="Hirst J."/>
            <person name="Bhumbra G.S."/>
            <person name="Kozik P."/>
            <person name="Jackson L.P."/>
            <person name="Sahlender D.A."/>
            <person name="Robinson M.S."/>
        </authorList>
    </citation>
    <scope>SUBCELLULAR LOCATION</scope>
</reference>
<reference key="4">
    <citation type="journal article" date="2012" name="Nat. Commun.">
        <title>Quantitative maps of protein phosphorylation sites across 14 different rat organs and tissues.</title>
        <authorList>
            <person name="Lundby A."/>
            <person name="Secher A."/>
            <person name="Lage K."/>
            <person name="Nordsborg N.B."/>
            <person name="Dmytriyev A."/>
            <person name="Lundby C."/>
            <person name="Olsen J.V."/>
        </authorList>
    </citation>
    <scope>PHOSPHORYLATION [LARGE SCALE ANALYSIS] AT SER-400</scope>
    <scope>IDENTIFICATION BY MASS SPECTROMETRY [LARGE SCALE ANALYSIS]</scope>
</reference>
<organism>
    <name type="scientific">Rattus norvegicus</name>
    <name type="common">Rat</name>
    <dbReference type="NCBI Taxonomy" id="10116"/>
    <lineage>
        <taxon>Eukaryota</taxon>
        <taxon>Metazoa</taxon>
        <taxon>Chordata</taxon>
        <taxon>Craniata</taxon>
        <taxon>Vertebrata</taxon>
        <taxon>Euteleostomi</taxon>
        <taxon>Mammalia</taxon>
        <taxon>Eutheria</taxon>
        <taxon>Euarchontoglires</taxon>
        <taxon>Glires</taxon>
        <taxon>Rodentia</taxon>
        <taxon>Myomorpha</taxon>
        <taxon>Muroidea</taxon>
        <taxon>Muridae</taxon>
        <taxon>Murinae</taxon>
        <taxon>Rattus</taxon>
    </lineage>
</organism>
<evidence type="ECO:0000250" key="1">
    <source>
        <dbReference type="UniProtKB" id="Q96N21"/>
    </source>
</evidence>
<evidence type="ECO:0000256" key="2">
    <source>
        <dbReference type="SAM" id="MobiDB-lite"/>
    </source>
</evidence>
<evidence type="ECO:0000269" key="3">
    <source>
    </source>
</evidence>
<evidence type="ECO:0000303" key="4">
    <source>
    </source>
</evidence>
<evidence type="ECO:0000305" key="5"/>
<evidence type="ECO:0000312" key="6">
    <source>
        <dbReference type="RGD" id="1307410"/>
    </source>
</evidence>
<evidence type="ECO:0007744" key="7">
    <source>
    </source>
</evidence>